<keyword id="KW-0028">Amino-acid biosynthesis</keyword>
<keyword id="KW-0170">Cobalt</keyword>
<keyword id="KW-0220">Diaminopimelate biosynthesis</keyword>
<keyword id="KW-0378">Hydrolase</keyword>
<keyword id="KW-0457">Lysine biosynthesis</keyword>
<keyword id="KW-0479">Metal-binding</keyword>
<keyword id="KW-0862">Zinc</keyword>
<gene>
    <name evidence="1" type="primary">dapE</name>
    <name type="ordered locus">WP0691</name>
</gene>
<name>DAPE_WOLPP</name>
<dbReference type="EC" id="3.5.1.18" evidence="1"/>
<dbReference type="EMBL" id="AM999887">
    <property type="protein sequence ID" value="CAQ54799.1"/>
    <property type="molecule type" value="Genomic_DNA"/>
</dbReference>
<dbReference type="RefSeq" id="WP_007302108.1">
    <property type="nucleotide sequence ID" value="NC_010981.1"/>
</dbReference>
<dbReference type="SMR" id="B3CLN1"/>
<dbReference type="KEGG" id="wpi:WP0691"/>
<dbReference type="eggNOG" id="COG0624">
    <property type="taxonomic scope" value="Bacteria"/>
</dbReference>
<dbReference type="HOGENOM" id="CLU_021802_4_0_5"/>
<dbReference type="UniPathway" id="UPA00034">
    <property type="reaction ID" value="UER00021"/>
</dbReference>
<dbReference type="Proteomes" id="UP000008814">
    <property type="component" value="Chromosome"/>
</dbReference>
<dbReference type="GO" id="GO:0008777">
    <property type="term" value="F:acetylornithine deacetylase activity"/>
    <property type="evidence" value="ECO:0007669"/>
    <property type="project" value="TreeGrafter"/>
</dbReference>
<dbReference type="GO" id="GO:0050897">
    <property type="term" value="F:cobalt ion binding"/>
    <property type="evidence" value="ECO:0007669"/>
    <property type="project" value="UniProtKB-UniRule"/>
</dbReference>
<dbReference type="GO" id="GO:0009014">
    <property type="term" value="F:succinyl-diaminopimelate desuccinylase activity"/>
    <property type="evidence" value="ECO:0007669"/>
    <property type="project" value="UniProtKB-UniRule"/>
</dbReference>
<dbReference type="GO" id="GO:0008270">
    <property type="term" value="F:zinc ion binding"/>
    <property type="evidence" value="ECO:0007669"/>
    <property type="project" value="UniProtKB-UniRule"/>
</dbReference>
<dbReference type="GO" id="GO:0019877">
    <property type="term" value="P:diaminopimelate biosynthetic process"/>
    <property type="evidence" value="ECO:0007669"/>
    <property type="project" value="UniProtKB-UniRule"/>
</dbReference>
<dbReference type="GO" id="GO:0006526">
    <property type="term" value="P:L-arginine biosynthetic process"/>
    <property type="evidence" value="ECO:0007669"/>
    <property type="project" value="TreeGrafter"/>
</dbReference>
<dbReference type="GO" id="GO:0009089">
    <property type="term" value="P:lysine biosynthetic process via diaminopimelate"/>
    <property type="evidence" value="ECO:0007669"/>
    <property type="project" value="UniProtKB-UniRule"/>
</dbReference>
<dbReference type="CDD" id="cd03891">
    <property type="entry name" value="M20_DapE_proteobac"/>
    <property type="match status" value="1"/>
</dbReference>
<dbReference type="Gene3D" id="3.40.630.10">
    <property type="entry name" value="Zn peptidases"/>
    <property type="match status" value="2"/>
</dbReference>
<dbReference type="HAMAP" id="MF_01690">
    <property type="entry name" value="DapE"/>
    <property type="match status" value="1"/>
</dbReference>
<dbReference type="InterPro" id="IPR036264">
    <property type="entry name" value="Bact_exopeptidase_dim_dom"/>
</dbReference>
<dbReference type="InterPro" id="IPR005941">
    <property type="entry name" value="DapE_proteobac"/>
</dbReference>
<dbReference type="InterPro" id="IPR002933">
    <property type="entry name" value="Peptidase_M20"/>
</dbReference>
<dbReference type="InterPro" id="IPR011650">
    <property type="entry name" value="Peptidase_M20_dimer"/>
</dbReference>
<dbReference type="InterPro" id="IPR050072">
    <property type="entry name" value="Peptidase_M20A"/>
</dbReference>
<dbReference type="NCBIfam" id="TIGR01246">
    <property type="entry name" value="dapE_proteo"/>
    <property type="match status" value="1"/>
</dbReference>
<dbReference type="NCBIfam" id="NF009557">
    <property type="entry name" value="PRK13009.1"/>
    <property type="match status" value="1"/>
</dbReference>
<dbReference type="PANTHER" id="PTHR43808">
    <property type="entry name" value="ACETYLORNITHINE DEACETYLASE"/>
    <property type="match status" value="1"/>
</dbReference>
<dbReference type="PANTHER" id="PTHR43808:SF31">
    <property type="entry name" value="N-ACETYL-L-CITRULLINE DEACETYLASE"/>
    <property type="match status" value="1"/>
</dbReference>
<dbReference type="Pfam" id="PF07687">
    <property type="entry name" value="M20_dimer"/>
    <property type="match status" value="1"/>
</dbReference>
<dbReference type="Pfam" id="PF01546">
    <property type="entry name" value="Peptidase_M20"/>
    <property type="match status" value="1"/>
</dbReference>
<dbReference type="SUPFAM" id="SSF55031">
    <property type="entry name" value="Bacterial exopeptidase dimerisation domain"/>
    <property type="match status" value="1"/>
</dbReference>
<dbReference type="SUPFAM" id="SSF53187">
    <property type="entry name" value="Zn-dependent exopeptidases"/>
    <property type="match status" value="1"/>
</dbReference>
<comment type="function">
    <text evidence="1">Catalyzes the hydrolysis of N-succinyl-L,L-diaminopimelic acid (SDAP), forming succinate and LL-2,6-diaminopimelate (DAP), an intermediate involved in the bacterial biosynthesis of lysine and meso-diaminopimelic acid, an essential component of bacterial cell walls.</text>
</comment>
<comment type="catalytic activity">
    <reaction evidence="1">
        <text>N-succinyl-(2S,6S)-2,6-diaminopimelate + H2O = (2S,6S)-2,6-diaminopimelate + succinate</text>
        <dbReference type="Rhea" id="RHEA:22608"/>
        <dbReference type="ChEBI" id="CHEBI:15377"/>
        <dbReference type="ChEBI" id="CHEBI:30031"/>
        <dbReference type="ChEBI" id="CHEBI:57609"/>
        <dbReference type="ChEBI" id="CHEBI:58087"/>
        <dbReference type="EC" id="3.5.1.18"/>
    </reaction>
</comment>
<comment type="cofactor">
    <cofactor evidence="1">
        <name>Zn(2+)</name>
        <dbReference type="ChEBI" id="CHEBI:29105"/>
    </cofactor>
    <cofactor evidence="1">
        <name>Co(2+)</name>
        <dbReference type="ChEBI" id="CHEBI:48828"/>
    </cofactor>
    <text evidence="1">Binds 2 Zn(2+) or Co(2+) ions per subunit.</text>
</comment>
<comment type="pathway">
    <text evidence="1">Amino-acid biosynthesis; L-lysine biosynthesis via DAP pathway; LL-2,6-diaminopimelate from (S)-tetrahydrodipicolinate (succinylase route): step 3/3.</text>
</comment>
<comment type="subunit">
    <text evidence="1">Homodimer.</text>
</comment>
<comment type="similarity">
    <text evidence="1">Belongs to the peptidase M20A family. DapE subfamily.</text>
</comment>
<accession>B3CLN1</accession>
<feature type="chain" id="PRO_0000375776" description="Succinyl-diaminopimelate desuccinylase">
    <location>
        <begin position="1"/>
        <end position="398"/>
    </location>
</feature>
<feature type="active site" evidence="1">
    <location>
        <position position="70"/>
    </location>
</feature>
<feature type="active site" description="Proton acceptor" evidence="1">
    <location>
        <position position="135"/>
    </location>
</feature>
<feature type="binding site" evidence="1">
    <location>
        <position position="68"/>
    </location>
    <ligand>
        <name>Zn(2+)</name>
        <dbReference type="ChEBI" id="CHEBI:29105"/>
        <label>1</label>
    </ligand>
</feature>
<feature type="binding site" evidence="1">
    <location>
        <position position="101"/>
    </location>
    <ligand>
        <name>Zn(2+)</name>
        <dbReference type="ChEBI" id="CHEBI:29105"/>
        <label>1</label>
    </ligand>
</feature>
<feature type="binding site" evidence="1">
    <location>
        <position position="101"/>
    </location>
    <ligand>
        <name>Zn(2+)</name>
        <dbReference type="ChEBI" id="CHEBI:29105"/>
        <label>2</label>
    </ligand>
</feature>
<feature type="binding site" evidence="1">
    <location>
        <position position="136"/>
    </location>
    <ligand>
        <name>Zn(2+)</name>
        <dbReference type="ChEBI" id="CHEBI:29105"/>
        <label>2</label>
    </ligand>
</feature>
<feature type="binding site" evidence="1">
    <location>
        <position position="164"/>
    </location>
    <ligand>
        <name>Zn(2+)</name>
        <dbReference type="ChEBI" id="CHEBI:29105"/>
        <label>1</label>
    </ligand>
</feature>
<feature type="binding site" evidence="1">
    <location>
        <position position="349"/>
    </location>
    <ligand>
        <name>Zn(2+)</name>
        <dbReference type="ChEBI" id="CHEBI:29105"/>
        <label>2</label>
    </ligand>
</feature>
<proteinExistence type="inferred from homology"/>
<protein>
    <recommendedName>
        <fullName evidence="1">Succinyl-diaminopimelate desuccinylase</fullName>
        <shortName evidence="1">SDAP desuccinylase</shortName>
        <ecNumber evidence="1">3.5.1.18</ecNumber>
    </recommendedName>
    <alternativeName>
        <fullName evidence="1">N-succinyl-LL-2,6-diaminoheptanedioate amidohydrolase</fullName>
    </alternativeName>
</protein>
<evidence type="ECO:0000255" key="1">
    <source>
        <dbReference type="HAMAP-Rule" id="MF_01690"/>
    </source>
</evidence>
<reference key="1">
    <citation type="journal article" date="2008" name="Mol. Biol. Evol.">
        <title>Genome evolution of Wolbachia strain wPip from the Culex pipiens group.</title>
        <authorList>
            <person name="Klasson L."/>
            <person name="Walker T."/>
            <person name="Sebaihia M."/>
            <person name="Sanders M.J."/>
            <person name="Quail M.A."/>
            <person name="Lord A."/>
            <person name="Sanders S."/>
            <person name="Earl J."/>
            <person name="O'Neill S.L."/>
            <person name="Thomson N."/>
            <person name="Sinkins S.P."/>
            <person name="Parkhill J."/>
        </authorList>
    </citation>
    <scope>NUCLEOTIDE SEQUENCE [LARGE SCALE GENOMIC DNA]</scope>
    <source>
        <strain>wPip</strain>
    </source>
</reference>
<organism>
    <name type="scientific">Wolbachia pipientis subsp. Culex pipiens (strain wPip)</name>
    <dbReference type="NCBI Taxonomy" id="570417"/>
    <lineage>
        <taxon>Bacteria</taxon>
        <taxon>Pseudomonadati</taxon>
        <taxon>Pseudomonadota</taxon>
        <taxon>Alphaproteobacteria</taxon>
        <taxon>Rickettsiales</taxon>
        <taxon>Anaplasmataceae</taxon>
        <taxon>Wolbachieae</taxon>
        <taxon>Wolbachia</taxon>
    </lineage>
</organism>
<sequence>MKIDPVELTKKLISFKSITPKDDGAIEHIAAILKKSGFECEILEFGDKVKNLYAKYINGVPNLCFAGHVDVVPPGELKDWISDPFKPEIRDGMLYGRGAADMKSGIAAFIAAIVDSVAGKFRFSGSISALITSAEESTEEHGTKAVLEWMKSKQKKIDFCIVGEPTSSEKLGDTIKIGRRGSATFKLICHGKQGHVAYPELADNPIYKMISILSKIKDTTFDTGNKYFQPSHCEITTIDVGNNTNNLIPSSIAAGFNIRYNNIQTLDGLYKLIDEICSSVTNDYKLSMQSSRNVFLSIPDRNTDIMLDAINKITGIDAVLSTNGGTSDAAFIKDICPVIEFGMINKTAHQVNECVSIDDIHKLTAIYKEFIKNYFYPTNKILNQINVIGNTPDGPLLA</sequence>